<sequence length="443" mass="49893">MKPLLALVGRPNVGKSTLFNRILRQRSAIVDPTPGVTRDRHIAEGEWQGKQFKLMDTGGYNTDGDVLSKAMLEQTLHALADADSILFITDARAGLSYEDLELARILQRSFQHKQLFFVVNKVESPQLVIEAESFIKTGFTTPYFVSAKDGSGVADLLDDVLEALPEAPEGEVKGDTAVHLAIVGRPNVGKSSFVNALLGTNRHIVSNIPGTTRDAIDSRLMRNQQEYLLIDTAGLRKRTKIDAGIEYYSSLRSERAIERCEVAIVMLDAEQGIEKQDLKIINMAIERKKGVLLLVNKWDLIEKDSKTSIRYEEQLRMAMGNLSYVPVLFVSAMTKKNLYRALDTALQISRNRSQNVSTSQLNKFLEQTLAQVHPATKSGRELKIKYMTQLKSAWPVFGFFCNDPLLVQSNFRKFLENKLREAYNFEGVPISLRFLHKNKVKED</sequence>
<evidence type="ECO:0000255" key="1">
    <source>
        <dbReference type="HAMAP-Rule" id="MF_00195"/>
    </source>
</evidence>
<reference key="1">
    <citation type="submission" date="2005-08" db="EMBL/GenBank/DDBJ databases">
        <title>Complete sequence of Chlorobium chlorochromatii CaD3.</title>
        <authorList>
            <consortium name="US DOE Joint Genome Institute"/>
            <person name="Copeland A."/>
            <person name="Lucas S."/>
            <person name="Lapidus A."/>
            <person name="Barry K."/>
            <person name="Detter J.C."/>
            <person name="Glavina T."/>
            <person name="Hammon N."/>
            <person name="Israni S."/>
            <person name="Pitluck S."/>
            <person name="Bryant D."/>
            <person name="Schmutz J."/>
            <person name="Larimer F."/>
            <person name="Land M."/>
            <person name="Kyrpides N."/>
            <person name="Ivanova N."/>
            <person name="Richardson P."/>
        </authorList>
    </citation>
    <scope>NUCLEOTIDE SEQUENCE [LARGE SCALE GENOMIC DNA]</scope>
    <source>
        <strain>CaD3</strain>
    </source>
</reference>
<dbReference type="EMBL" id="CP000108">
    <property type="protein sequence ID" value="ABB28903.1"/>
    <property type="molecule type" value="Genomic_DNA"/>
</dbReference>
<dbReference type="SMR" id="Q3AQ22"/>
<dbReference type="STRING" id="340177.Cag_1651"/>
<dbReference type="KEGG" id="cch:Cag_1651"/>
<dbReference type="eggNOG" id="COG1160">
    <property type="taxonomic scope" value="Bacteria"/>
</dbReference>
<dbReference type="HOGENOM" id="CLU_016077_6_2_10"/>
<dbReference type="OrthoDB" id="9805918at2"/>
<dbReference type="GO" id="GO:0016887">
    <property type="term" value="F:ATP hydrolysis activity"/>
    <property type="evidence" value="ECO:0007669"/>
    <property type="project" value="InterPro"/>
</dbReference>
<dbReference type="GO" id="GO:0005525">
    <property type="term" value="F:GTP binding"/>
    <property type="evidence" value="ECO:0007669"/>
    <property type="project" value="UniProtKB-UniRule"/>
</dbReference>
<dbReference type="GO" id="GO:0043022">
    <property type="term" value="F:ribosome binding"/>
    <property type="evidence" value="ECO:0007669"/>
    <property type="project" value="TreeGrafter"/>
</dbReference>
<dbReference type="GO" id="GO:0042254">
    <property type="term" value="P:ribosome biogenesis"/>
    <property type="evidence" value="ECO:0007669"/>
    <property type="project" value="UniProtKB-KW"/>
</dbReference>
<dbReference type="CDD" id="cd01894">
    <property type="entry name" value="EngA1"/>
    <property type="match status" value="1"/>
</dbReference>
<dbReference type="CDD" id="cd01895">
    <property type="entry name" value="EngA2"/>
    <property type="match status" value="1"/>
</dbReference>
<dbReference type="FunFam" id="3.40.50.300:FF:000040">
    <property type="entry name" value="GTPase Der"/>
    <property type="match status" value="1"/>
</dbReference>
<dbReference type="Gene3D" id="3.30.300.20">
    <property type="match status" value="1"/>
</dbReference>
<dbReference type="Gene3D" id="3.40.50.300">
    <property type="entry name" value="P-loop containing nucleotide triphosphate hydrolases"/>
    <property type="match status" value="2"/>
</dbReference>
<dbReference type="HAMAP" id="MF_00195">
    <property type="entry name" value="GTPase_Der"/>
    <property type="match status" value="1"/>
</dbReference>
<dbReference type="InterPro" id="IPR003593">
    <property type="entry name" value="AAA+_ATPase"/>
</dbReference>
<dbReference type="InterPro" id="IPR031166">
    <property type="entry name" value="G_ENGA"/>
</dbReference>
<dbReference type="InterPro" id="IPR006073">
    <property type="entry name" value="GTP-bd"/>
</dbReference>
<dbReference type="InterPro" id="IPR016484">
    <property type="entry name" value="GTPase_Der"/>
</dbReference>
<dbReference type="InterPro" id="IPR032859">
    <property type="entry name" value="KH_dom-like"/>
</dbReference>
<dbReference type="InterPro" id="IPR015946">
    <property type="entry name" value="KH_dom-like_a/b"/>
</dbReference>
<dbReference type="InterPro" id="IPR027417">
    <property type="entry name" value="P-loop_NTPase"/>
</dbReference>
<dbReference type="InterPro" id="IPR005225">
    <property type="entry name" value="Small_GTP-bd"/>
</dbReference>
<dbReference type="NCBIfam" id="TIGR03594">
    <property type="entry name" value="GTPase_EngA"/>
    <property type="match status" value="1"/>
</dbReference>
<dbReference type="NCBIfam" id="TIGR00231">
    <property type="entry name" value="small_GTP"/>
    <property type="match status" value="2"/>
</dbReference>
<dbReference type="PANTHER" id="PTHR43834">
    <property type="entry name" value="GTPASE DER"/>
    <property type="match status" value="1"/>
</dbReference>
<dbReference type="PANTHER" id="PTHR43834:SF6">
    <property type="entry name" value="GTPASE DER"/>
    <property type="match status" value="1"/>
</dbReference>
<dbReference type="Pfam" id="PF14714">
    <property type="entry name" value="KH_dom-like"/>
    <property type="match status" value="1"/>
</dbReference>
<dbReference type="Pfam" id="PF01926">
    <property type="entry name" value="MMR_HSR1"/>
    <property type="match status" value="2"/>
</dbReference>
<dbReference type="PIRSF" id="PIRSF006485">
    <property type="entry name" value="GTP-binding_EngA"/>
    <property type="match status" value="1"/>
</dbReference>
<dbReference type="PRINTS" id="PR00326">
    <property type="entry name" value="GTP1OBG"/>
</dbReference>
<dbReference type="SMART" id="SM00382">
    <property type="entry name" value="AAA"/>
    <property type="match status" value="2"/>
</dbReference>
<dbReference type="SUPFAM" id="SSF52540">
    <property type="entry name" value="P-loop containing nucleoside triphosphate hydrolases"/>
    <property type="match status" value="2"/>
</dbReference>
<dbReference type="PROSITE" id="PS51712">
    <property type="entry name" value="G_ENGA"/>
    <property type="match status" value="2"/>
</dbReference>
<accession>Q3AQ22</accession>
<organism>
    <name type="scientific">Chlorobium chlorochromatii (strain CaD3)</name>
    <dbReference type="NCBI Taxonomy" id="340177"/>
    <lineage>
        <taxon>Bacteria</taxon>
        <taxon>Pseudomonadati</taxon>
        <taxon>Chlorobiota</taxon>
        <taxon>Chlorobiia</taxon>
        <taxon>Chlorobiales</taxon>
        <taxon>Chlorobiaceae</taxon>
        <taxon>Chlorobium/Pelodictyon group</taxon>
        <taxon>Chlorobium</taxon>
    </lineage>
</organism>
<feature type="chain" id="PRO_1000011599" description="GTPase Der">
    <location>
        <begin position="1"/>
        <end position="443"/>
    </location>
</feature>
<feature type="domain" description="EngA-type G 1">
    <location>
        <begin position="3"/>
        <end position="168"/>
    </location>
</feature>
<feature type="domain" description="EngA-type G 2">
    <location>
        <begin position="178"/>
        <end position="353"/>
    </location>
</feature>
<feature type="domain" description="KH-like" evidence="1">
    <location>
        <begin position="354"/>
        <end position="438"/>
    </location>
</feature>
<feature type="binding site" evidence="1">
    <location>
        <begin position="9"/>
        <end position="16"/>
    </location>
    <ligand>
        <name>GTP</name>
        <dbReference type="ChEBI" id="CHEBI:37565"/>
        <label>1</label>
    </ligand>
</feature>
<feature type="binding site" evidence="1">
    <location>
        <begin position="56"/>
        <end position="60"/>
    </location>
    <ligand>
        <name>GTP</name>
        <dbReference type="ChEBI" id="CHEBI:37565"/>
        <label>1</label>
    </ligand>
</feature>
<feature type="binding site" evidence="1">
    <location>
        <begin position="120"/>
        <end position="123"/>
    </location>
    <ligand>
        <name>GTP</name>
        <dbReference type="ChEBI" id="CHEBI:37565"/>
        <label>1</label>
    </ligand>
</feature>
<feature type="binding site" evidence="1">
    <location>
        <begin position="184"/>
        <end position="191"/>
    </location>
    <ligand>
        <name>GTP</name>
        <dbReference type="ChEBI" id="CHEBI:37565"/>
        <label>2</label>
    </ligand>
</feature>
<feature type="binding site" evidence="1">
    <location>
        <begin position="231"/>
        <end position="235"/>
    </location>
    <ligand>
        <name>GTP</name>
        <dbReference type="ChEBI" id="CHEBI:37565"/>
        <label>2</label>
    </ligand>
</feature>
<feature type="binding site" evidence="1">
    <location>
        <begin position="296"/>
        <end position="299"/>
    </location>
    <ligand>
        <name>GTP</name>
        <dbReference type="ChEBI" id="CHEBI:37565"/>
        <label>2</label>
    </ligand>
</feature>
<proteinExistence type="inferred from homology"/>
<comment type="function">
    <text evidence="1">GTPase that plays an essential role in the late steps of ribosome biogenesis.</text>
</comment>
<comment type="subunit">
    <text evidence="1">Associates with the 50S ribosomal subunit.</text>
</comment>
<comment type="similarity">
    <text evidence="1">Belongs to the TRAFAC class TrmE-Era-EngA-EngB-Septin-like GTPase superfamily. EngA (Der) GTPase family.</text>
</comment>
<gene>
    <name evidence="1" type="primary">der</name>
    <name type="synonym">engA</name>
    <name type="ordered locus">Cag_1651</name>
</gene>
<protein>
    <recommendedName>
        <fullName evidence="1">GTPase Der</fullName>
    </recommendedName>
    <alternativeName>
        <fullName evidence="1">GTP-binding protein EngA</fullName>
    </alternativeName>
</protein>
<keyword id="KW-0342">GTP-binding</keyword>
<keyword id="KW-0547">Nucleotide-binding</keyword>
<keyword id="KW-0677">Repeat</keyword>
<keyword id="KW-0690">Ribosome biogenesis</keyword>
<name>DER_CHLCH</name>